<comment type="function">
    <text evidence="1">Required for accurate and efficient protein synthesis under certain stress conditions. May act as a fidelity factor of the translation reaction, by catalyzing a one-codon backward translocation of tRNAs on improperly translocated ribosomes. Back-translocation proceeds from a post-translocation (POST) complex to a pre-translocation (PRE) complex, thus giving elongation factor G a second chance to translocate the tRNAs correctly. Binds to ribosomes in a GTP-dependent manner.</text>
</comment>
<comment type="catalytic activity">
    <reaction evidence="1">
        <text>GTP + H2O = GDP + phosphate + H(+)</text>
        <dbReference type="Rhea" id="RHEA:19669"/>
        <dbReference type="ChEBI" id="CHEBI:15377"/>
        <dbReference type="ChEBI" id="CHEBI:15378"/>
        <dbReference type="ChEBI" id="CHEBI:37565"/>
        <dbReference type="ChEBI" id="CHEBI:43474"/>
        <dbReference type="ChEBI" id="CHEBI:58189"/>
        <dbReference type="EC" id="3.6.5.n1"/>
    </reaction>
</comment>
<comment type="subcellular location">
    <subcellularLocation>
        <location evidence="1">Cell inner membrane</location>
        <topology evidence="1">Peripheral membrane protein</topology>
        <orientation evidence="1">Cytoplasmic side</orientation>
    </subcellularLocation>
</comment>
<comment type="similarity">
    <text evidence="1">Belongs to the TRAFAC class translation factor GTPase superfamily. Classic translation factor GTPase family. LepA subfamily.</text>
</comment>
<evidence type="ECO:0000255" key="1">
    <source>
        <dbReference type="HAMAP-Rule" id="MF_00071"/>
    </source>
</evidence>
<protein>
    <recommendedName>
        <fullName evidence="1">Elongation factor 4</fullName>
        <shortName evidence="1">EF-4</shortName>
        <ecNumber evidence="1">3.6.5.n1</ecNumber>
    </recommendedName>
    <alternativeName>
        <fullName evidence="1">Ribosomal back-translocase LepA</fullName>
    </alternativeName>
</protein>
<gene>
    <name evidence="1" type="primary">lepA</name>
    <name type="ordered locus">Cla_1118</name>
</gene>
<feature type="chain" id="PRO_1000118042" description="Elongation factor 4">
    <location>
        <begin position="1"/>
        <end position="596"/>
    </location>
</feature>
<feature type="domain" description="tr-type G">
    <location>
        <begin position="2"/>
        <end position="183"/>
    </location>
</feature>
<feature type="binding site" evidence="1">
    <location>
        <begin position="14"/>
        <end position="19"/>
    </location>
    <ligand>
        <name>GTP</name>
        <dbReference type="ChEBI" id="CHEBI:37565"/>
    </ligand>
</feature>
<feature type="binding site" evidence="1">
    <location>
        <begin position="130"/>
        <end position="133"/>
    </location>
    <ligand>
        <name>GTP</name>
        <dbReference type="ChEBI" id="CHEBI:37565"/>
    </ligand>
</feature>
<dbReference type="EC" id="3.6.5.n1" evidence="1"/>
<dbReference type="EMBL" id="CP000932">
    <property type="protein sequence ID" value="ACM64440.1"/>
    <property type="molecule type" value="Genomic_DNA"/>
</dbReference>
<dbReference type="RefSeq" id="WP_012661823.1">
    <property type="nucleotide sequence ID" value="NC_012039.1"/>
</dbReference>
<dbReference type="RefSeq" id="WP_012661824.1">
    <property type="nucleotide sequence ID" value="NC_012039.1"/>
</dbReference>
<dbReference type="SMR" id="B9KD01"/>
<dbReference type="STRING" id="306263.Cla_1118"/>
<dbReference type="KEGG" id="cla:CLA_1118"/>
<dbReference type="PATRIC" id="fig|306263.5.peg.1103"/>
<dbReference type="eggNOG" id="COG0481">
    <property type="taxonomic scope" value="Bacteria"/>
</dbReference>
<dbReference type="HOGENOM" id="CLU_009995_3_3_7"/>
<dbReference type="Proteomes" id="UP000007727">
    <property type="component" value="Chromosome"/>
</dbReference>
<dbReference type="GO" id="GO:0005886">
    <property type="term" value="C:plasma membrane"/>
    <property type="evidence" value="ECO:0007669"/>
    <property type="project" value="UniProtKB-SubCell"/>
</dbReference>
<dbReference type="GO" id="GO:0005525">
    <property type="term" value="F:GTP binding"/>
    <property type="evidence" value="ECO:0007669"/>
    <property type="project" value="UniProtKB-UniRule"/>
</dbReference>
<dbReference type="GO" id="GO:0003924">
    <property type="term" value="F:GTPase activity"/>
    <property type="evidence" value="ECO:0007669"/>
    <property type="project" value="UniProtKB-UniRule"/>
</dbReference>
<dbReference type="GO" id="GO:0043022">
    <property type="term" value="F:ribosome binding"/>
    <property type="evidence" value="ECO:0007669"/>
    <property type="project" value="UniProtKB-UniRule"/>
</dbReference>
<dbReference type="GO" id="GO:0003746">
    <property type="term" value="F:translation elongation factor activity"/>
    <property type="evidence" value="ECO:0007669"/>
    <property type="project" value="UniProtKB-UniRule"/>
</dbReference>
<dbReference type="GO" id="GO:0045727">
    <property type="term" value="P:positive regulation of translation"/>
    <property type="evidence" value="ECO:0007669"/>
    <property type="project" value="UniProtKB-UniRule"/>
</dbReference>
<dbReference type="CDD" id="cd16260">
    <property type="entry name" value="EF4_III"/>
    <property type="match status" value="1"/>
</dbReference>
<dbReference type="CDD" id="cd01890">
    <property type="entry name" value="LepA"/>
    <property type="match status" value="1"/>
</dbReference>
<dbReference type="CDD" id="cd03709">
    <property type="entry name" value="lepA_C"/>
    <property type="match status" value="1"/>
</dbReference>
<dbReference type="FunFam" id="3.40.50.300:FF:000078">
    <property type="entry name" value="Elongation factor 4"/>
    <property type="match status" value="1"/>
</dbReference>
<dbReference type="FunFam" id="2.40.30.10:FF:000015">
    <property type="entry name" value="Translation factor GUF1, mitochondrial"/>
    <property type="match status" value="1"/>
</dbReference>
<dbReference type="FunFam" id="3.30.70.240:FF:000007">
    <property type="entry name" value="Translation factor GUF1, mitochondrial"/>
    <property type="match status" value="1"/>
</dbReference>
<dbReference type="FunFam" id="3.30.70.2570:FF:000001">
    <property type="entry name" value="Translation factor GUF1, mitochondrial"/>
    <property type="match status" value="1"/>
</dbReference>
<dbReference type="FunFam" id="3.30.70.870:FF:000004">
    <property type="entry name" value="Translation factor GUF1, mitochondrial"/>
    <property type="match status" value="1"/>
</dbReference>
<dbReference type="Gene3D" id="3.30.70.240">
    <property type="match status" value="1"/>
</dbReference>
<dbReference type="Gene3D" id="3.30.70.2570">
    <property type="entry name" value="Elongation factor 4, C-terminal domain"/>
    <property type="match status" value="1"/>
</dbReference>
<dbReference type="Gene3D" id="3.30.70.870">
    <property type="entry name" value="Elongation Factor G (Translational Gtpase), domain 3"/>
    <property type="match status" value="1"/>
</dbReference>
<dbReference type="Gene3D" id="3.40.50.300">
    <property type="entry name" value="P-loop containing nucleotide triphosphate hydrolases"/>
    <property type="match status" value="1"/>
</dbReference>
<dbReference type="Gene3D" id="2.40.30.10">
    <property type="entry name" value="Translation factors"/>
    <property type="match status" value="1"/>
</dbReference>
<dbReference type="HAMAP" id="MF_00071">
    <property type="entry name" value="LepA"/>
    <property type="match status" value="1"/>
</dbReference>
<dbReference type="InterPro" id="IPR006297">
    <property type="entry name" value="EF-4"/>
</dbReference>
<dbReference type="InterPro" id="IPR035647">
    <property type="entry name" value="EFG_III/V"/>
</dbReference>
<dbReference type="InterPro" id="IPR000640">
    <property type="entry name" value="EFG_V-like"/>
</dbReference>
<dbReference type="InterPro" id="IPR004161">
    <property type="entry name" value="EFTu-like_2"/>
</dbReference>
<dbReference type="InterPro" id="IPR031157">
    <property type="entry name" value="G_TR_CS"/>
</dbReference>
<dbReference type="InterPro" id="IPR038363">
    <property type="entry name" value="LepA_C_sf"/>
</dbReference>
<dbReference type="InterPro" id="IPR013842">
    <property type="entry name" value="LepA_CTD"/>
</dbReference>
<dbReference type="InterPro" id="IPR035654">
    <property type="entry name" value="LepA_IV"/>
</dbReference>
<dbReference type="InterPro" id="IPR027417">
    <property type="entry name" value="P-loop_NTPase"/>
</dbReference>
<dbReference type="InterPro" id="IPR005225">
    <property type="entry name" value="Small_GTP-bd"/>
</dbReference>
<dbReference type="InterPro" id="IPR000795">
    <property type="entry name" value="T_Tr_GTP-bd_dom"/>
</dbReference>
<dbReference type="InterPro" id="IPR009000">
    <property type="entry name" value="Transl_B-barrel_sf"/>
</dbReference>
<dbReference type="NCBIfam" id="TIGR01393">
    <property type="entry name" value="lepA"/>
    <property type="match status" value="1"/>
</dbReference>
<dbReference type="NCBIfam" id="TIGR00231">
    <property type="entry name" value="small_GTP"/>
    <property type="match status" value="1"/>
</dbReference>
<dbReference type="PANTHER" id="PTHR43512:SF4">
    <property type="entry name" value="TRANSLATION FACTOR GUF1 HOMOLOG, CHLOROPLASTIC"/>
    <property type="match status" value="1"/>
</dbReference>
<dbReference type="PANTHER" id="PTHR43512">
    <property type="entry name" value="TRANSLATION FACTOR GUF1-RELATED"/>
    <property type="match status" value="1"/>
</dbReference>
<dbReference type="Pfam" id="PF00679">
    <property type="entry name" value="EFG_C"/>
    <property type="match status" value="1"/>
</dbReference>
<dbReference type="Pfam" id="PF00009">
    <property type="entry name" value="GTP_EFTU"/>
    <property type="match status" value="1"/>
</dbReference>
<dbReference type="Pfam" id="PF03144">
    <property type="entry name" value="GTP_EFTU_D2"/>
    <property type="match status" value="1"/>
</dbReference>
<dbReference type="Pfam" id="PF06421">
    <property type="entry name" value="LepA_C"/>
    <property type="match status" value="1"/>
</dbReference>
<dbReference type="PRINTS" id="PR00315">
    <property type="entry name" value="ELONGATNFCT"/>
</dbReference>
<dbReference type="SMART" id="SM00838">
    <property type="entry name" value="EFG_C"/>
    <property type="match status" value="1"/>
</dbReference>
<dbReference type="SUPFAM" id="SSF54980">
    <property type="entry name" value="EF-G C-terminal domain-like"/>
    <property type="match status" value="2"/>
</dbReference>
<dbReference type="SUPFAM" id="SSF52540">
    <property type="entry name" value="P-loop containing nucleoside triphosphate hydrolases"/>
    <property type="match status" value="1"/>
</dbReference>
<dbReference type="SUPFAM" id="SSF50447">
    <property type="entry name" value="Translation proteins"/>
    <property type="match status" value="1"/>
</dbReference>
<dbReference type="PROSITE" id="PS00301">
    <property type="entry name" value="G_TR_1"/>
    <property type="match status" value="1"/>
</dbReference>
<dbReference type="PROSITE" id="PS51722">
    <property type="entry name" value="G_TR_2"/>
    <property type="match status" value="1"/>
</dbReference>
<name>LEPA_CAMLR</name>
<sequence>MKNIRNFSIIAHIDHGKSTLADRIISECGAISDRLMSNQVMDTMDIEKERGITIKAQSVRLNYKFNNEEYVLNLIDTPGHVDFSYEVSRSLASCEGALLVVDASQGVEAQTIANVYIALENNLEIIPVINKIDLPSADIEKVKHEIEHIIGIDCSSAICVSAKTGVGIKELIETIITKIPAPKTNDEAPTKALIYDSWFDNYLGALALVRVYEGNIAKNEEVLIMSTDKRHIVQDLFYPHPLSPIKTKKLESGEVGVIVLGLKNVADVQVGDTITLTKNKAKEAIGGFEKAKAFVFAGLYPIETDKFEDLRDALDKLKLNDSSITYEPETSLALGFGFRVGFLGLLHMEVIKERLEREFNLDLIATAPTVTYEIYQTDGEILKIQNPSELPPVNKIDHIKEPYVKATIITPSEYLGNLITLLNRKRGMQVKMDYITPERVLLEYDIPLNEIVMDFYDKLKSLTKGYASFDYEPIEFRVGDLVKLDIKVAGENVDALSIIVPNEKALSKGRELVKAMKEIVPRQLFEVAIQASIGNKIIARENVKSMGKNVTAKCYGGDITRKRKLLEKQKEGKKRMKAIGKVHLPQEAFLSVLKID</sequence>
<accession>B9KD01</accession>
<proteinExistence type="inferred from homology"/>
<organism>
    <name type="scientific">Campylobacter lari (strain RM2100 / D67 / ATCC BAA-1060)</name>
    <dbReference type="NCBI Taxonomy" id="306263"/>
    <lineage>
        <taxon>Bacteria</taxon>
        <taxon>Pseudomonadati</taxon>
        <taxon>Campylobacterota</taxon>
        <taxon>Epsilonproteobacteria</taxon>
        <taxon>Campylobacterales</taxon>
        <taxon>Campylobacteraceae</taxon>
        <taxon>Campylobacter</taxon>
    </lineage>
</organism>
<keyword id="KW-0997">Cell inner membrane</keyword>
<keyword id="KW-1003">Cell membrane</keyword>
<keyword id="KW-0342">GTP-binding</keyword>
<keyword id="KW-0378">Hydrolase</keyword>
<keyword id="KW-0472">Membrane</keyword>
<keyword id="KW-0547">Nucleotide-binding</keyword>
<keyword id="KW-0648">Protein biosynthesis</keyword>
<keyword id="KW-1185">Reference proteome</keyword>
<reference key="1">
    <citation type="journal article" date="2008" name="Foodborne Pathog. Dis.">
        <title>The complete genome sequence and analysis of the human pathogen Campylobacter lari.</title>
        <authorList>
            <person name="Miller W.G."/>
            <person name="Wang G."/>
            <person name="Binnewies T.T."/>
            <person name="Parker C.T."/>
        </authorList>
    </citation>
    <scope>NUCLEOTIDE SEQUENCE [LARGE SCALE GENOMIC DNA]</scope>
    <source>
        <strain>RM2100 / D67 / ATCC BAA-1060</strain>
    </source>
</reference>